<organism>
    <name type="scientific">Lacticaseibacillus casei</name>
    <name type="common">Lactobacillus casei</name>
    <dbReference type="NCBI Taxonomy" id="1582"/>
    <lineage>
        <taxon>Bacteria</taxon>
        <taxon>Bacillati</taxon>
        <taxon>Bacillota</taxon>
        <taxon>Bacilli</taxon>
        <taxon>Lactobacillales</taxon>
        <taxon>Lactobacillaceae</taxon>
        <taxon>Lacticaseibacillus</taxon>
    </lineage>
</organism>
<proteinExistence type="evidence at protein level"/>
<gene>
    <name evidence="5" type="primary">lacF</name>
</gene>
<reference key="1">
    <citation type="journal article" date="1988" name="Gene">
        <title>Molecular cloning and nucleotide sequence of the factor IIIlac gene of Lactobacillus casei.</title>
        <authorList>
            <person name="Alpert C.-A."/>
            <person name="Chassy B.M."/>
        </authorList>
    </citation>
    <scope>NUCLEOTIDE SEQUENCE [GENOMIC DNA]</scope>
    <scope>PROTEIN SEQUENCE OF 3-20</scope>
    <scope>FUNCTION</scope>
    <scope>CATALYTIC ACTIVITY</scope>
    <scope>SUBUNIT</scope>
    <source>
        <strain>64H</strain>
    </source>
</reference>
<reference key="2">
    <citation type="journal article" date="1997" name="FEMS Microbiol. Lett.">
        <title>Establishing a model to study the regulation of the lactose operon in Lactobacillus casei.</title>
        <authorList>
            <person name="Gosalbes M.J."/>
            <person name="Monedero V."/>
            <person name="Alpert C.-A."/>
            <person name="Perez-Martinez G."/>
        </authorList>
    </citation>
    <scope>NUCLEOTIDE SEQUENCE [GENOMIC DNA]</scope>
    <source>
        <strain>ATCC 393 / DSM 20011 / JCM 1134 / BCRC 10697 / CCUG 21451 / NBRC 15883 / NCIMB 11970 / NCDO 161 / WDCM 00100</strain>
    </source>
</reference>
<name>PTLA_LACCA</name>
<feature type="chain" id="PRO_0000186596" description="PTS system lactose-specific EIIA component">
    <location>
        <begin position="1"/>
        <end position="112"/>
    </location>
</feature>
<feature type="domain" description="PTS EIIA type-3" evidence="3">
    <location>
        <begin position="6"/>
        <end position="104"/>
    </location>
</feature>
<feature type="active site" description="Tele-phosphohistidine intermediate" evidence="1">
    <location>
        <position position="80"/>
    </location>
</feature>
<feature type="binding site" evidence="2">
    <location>
        <position position="83"/>
    </location>
    <ligand>
        <name>Mg(2+)</name>
        <dbReference type="ChEBI" id="CHEBI:18420"/>
        <note>ligand shared between all trimeric partners</note>
    </ligand>
</feature>
<feature type="modified residue" description="Phosphohistidine; by HPr" evidence="1 3">
    <location>
        <position position="80"/>
    </location>
</feature>
<comment type="function">
    <text evidence="4">The phosphoenolpyruvate-dependent sugar phosphotransferase system (sugar PTS), a major carbohydrate active transport system, catalyzes the phosphorylation of incoming sugar substrates concomitantly with their translocation across the cell membrane. The enzyme II LacEF PTS system is involved in lactose transport.</text>
</comment>
<comment type="cofactor">
    <cofactor evidence="2">
        <name>Mg(2+)</name>
        <dbReference type="ChEBI" id="CHEBI:18420"/>
    </cofactor>
    <text evidence="2">Binds 1 Mg(2+) ion per trimer.</text>
</comment>
<comment type="subunit">
    <text evidence="4">Homotrimer.</text>
</comment>
<comment type="subcellular location">
    <subcellularLocation>
        <location evidence="6">Cytoplasm</location>
    </subcellularLocation>
</comment>
<comment type="induction">
    <text evidence="1">Induced by lactose, galactose and galactose-6-P. Repressed by glucose.</text>
</comment>
<comment type="domain">
    <text evidence="3">The PTS EIIA type-3 domain is phosphorylated by phospho-HPr on a histidyl residue. Then, it transfers the phosphoryl group to the PTS EIIB type-3 domain.</text>
</comment>
<comment type="sequence caution" evidence="6">
    <conflict type="erroneous initiation">
        <sequence resource="EMBL-CDS" id="CAB02558"/>
    </conflict>
    <text>Extended N-terminus.</text>
</comment>
<dbReference type="EMBL" id="M20150">
    <property type="protein sequence ID" value="AAA25239.1"/>
    <property type="molecule type" value="Genomic_DNA"/>
</dbReference>
<dbReference type="EMBL" id="Z80834">
    <property type="protein sequence ID" value="CAB02558.1"/>
    <property type="status" value="ALT_INIT"/>
    <property type="molecule type" value="Genomic_DNA"/>
</dbReference>
<dbReference type="PIR" id="B29898">
    <property type="entry name" value="B29898"/>
</dbReference>
<dbReference type="SMR" id="P11502"/>
<dbReference type="STRING" id="1582.AAW28_06700"/>
<dbReference type="eggNOG" id="COG1447">
    <property type="taxonomic scope" value="Bacteria"/>
</dbReference>
<dbReference type="GO" id="GO:0005737">
    <property type="term" value="C:cytoplasm"/>
    <property type="evidence" value="ECO:0007669"/>
    <property type="project" value="UniProtKB-SubCell"/>
</dbReference>
<dbReference type="GO" id="GO:0046872">
    <property type="term" value="F:metal ion binding"/>
    <property type="evidence" value="ECO:0007669"/>
    <property type="project" value="UniProtKB-KW"/>
</dbReference>
<dbReference type="GO" id="GO:0016740">
    <property type="term" value="F:transferase activity"/>
    <property type="evidence" value="ECO:0007669"/>
    <property type="project" value="UniProtKB-KW"/>
</dbReference>
<dbReference type="GO" id="GO:0009401">
    <property type="term" value="P:phosphoenolpyruvate-dependent sugar phosphotransferase system"/>
    <property type="evidence" value="ECO:0007669"/>
    <property type="project" value="UniProtKB-KW"/>
</dbReference>
<dbReference type="CDD" id="cd00215">
    <property type="entry name" value="PTS_IIA_lac"/>
    <property type="match status" value="1"/>
</dbReference>
<dbReference type="Gene3D" id="1.20.58.80">
    <property type="entry name" value="Phosphotransferase system, lactose/cellobiose-type IIA subunit"/>
    <property type="match status" value="1"/>
</dbReference>
<dbReference type="InterPro" id="IPR003188">
    <property type="entry name" value="PTS_IIA_lac/cel"/>
</dbReference>
<dbReference type="InterPro" id="IPR036542">
    <property type="entry name" value="PTS_IIA_lac/cel_sf"/>
</dbReference>
<dbReference type="NCBIfam" id="TIGR00823">
    <property type="entry name" value="EIIA-LAC"/>
    <property type="match status" value="1"/>
</dbReference>
<dbReference type="PANTHER" id="PTHR34382:SF9">
    <property type="entry name" value="PHOSPHOTRANSFERASE SYSTEM SUGAR-SPECIFIC EII COMPONENT"/>
    <property type="match status" value="1"/>
</dbReference>
<dbReference type="PANTHER" id="PTHR34382">
    <property type="entry name" value="PTS SYSTEM N,N'-DIACETYLCHITOBIOSE-SPECIFIC EIIA COMPONENT"/>
    <property type="match status" value="1"/>
</dbReference>
<dbReference type="Pfam" id="PF02255">
    <property type="entry name" value="PTS_IIA"/>
    <property type="match status" value="1"/>
</dbReference>
<dbReference type="PIRSF" id="PIRSF000699">
    <property type="entry name" value="PTS_IILac_III"/>
    <property type="match status" value="1"/>
</dbReference>
<dbReference type="SUPFAM" id="SSF46973">
    <property type="entry name" value="Enzyme IIa from lactose specific PTS, IIa-lac"/>
    <property type="match status" value="1"/>
</dbReference>
<dbReference type="PROSITE" id="PS51095">
    <property type="entry name" value="PTS_EIIA_TYPE_3"/>
    <property type="match status" value="1"/>
</dbReference>
<evidence type="ECO:0000250" key="1">
    <source>
        <dbReference type="UniProtKB" id="P0A0D6"/>
    </source>
</evidence>
<evidence type="ECO:0000250" key="2">
    <source>
        <dbReference type="UniProtKB" id="P23532"/>
    </source>
</evidence>
<evidence type="ECO:0000255" key="3">
    <source>
        <dbReference type="PROSITE-ProRule" id="PRU00418"/>
    </source>
</evidence>
<evidence type="ECO:0000269" key="4">
    <source>
    </source>
</evidence>
<evidence type="ECO:0000303" key="5">
    <source>
    </source>
</evidence>
<evidence type="ECO:0000305" key="6"/>
<accession>P11502</accession>
<keyword id="KW-0963">Cytoplasm</keyword>
<keyword id="KW-0903">Direct protein sequencing</keyword>
<keyword id="KW-0460">Magnesium</keyword>
<keyword id="KW-0479">Metal-binding</keyword>
<keyword id="KW-0597">Phosphoprotein</keyword>
<keyword id="KW-0598">Phosphotransferase system</keyword>
<keyword id="KW-0762">Sugar transport</keyword>
<keyword id="KW-0808">Transferase</keyword>
<keyword id="KW-0813">Transport</keyword>
<sequence>MMATKEEISMVGFALVAYAGDARTAAVHALDAAEAGDFDKANELVEKAQQDINEAHNQQTQLLSQEAGGAEMDVTFIMVHGQDTLMTTMLLIDETRYMIRMFKRIKELENKQ</sequence>
<protein>
    <recommendedName>
        <fullName evidence="5">PTS system lactose-specific EIIA component</fullName>
    </recommendedName>
    <alternativeName>
        <fullName evidence="5">EIIA-Lac</fullName>
    </alternativeName>
    <alternativeName>
        <fullName evidence="5">EIII-Lac</fullName>
    </alternativeName>
    <alternativeName>
        <fullName evidence="5">FIII-Lac</fullName>
    </alternativeName>
    <alternativeName>
        <fullName evidence="5">Lactose-specific phosphotransferase enzyme IIA component</fullName>
    </alternativeName>
</protein>